<feature type="chain" id="PRO_1000136966" description="5'-deoxynucleotidase YfbR">
    <location>
        <begin position="1"/>
        <end position="199"/>
    </location>
</feature>
<feature type="domain" description="HD" evidence="2">
    <location>
        <begin position="30"/>
        <end position="142"/>
    </location>
</feature>
<feature type="binding site" evidence="1">
    <location>
        <begin position="18"/>
        <end position="19"/>
    </location>
    <ligand>
        <name>substrate</name>
    </ligand>
</feature>
<feature type="binding site" evidence="1">
    <location>
        <position position="33"/>
    </location>
    <ligand>
        <name>a divalent metal cation</name>
        <dbReference type="ChEBI" id="CHEBI:60240"/>
    </ligand>
</feature>
<feature type="binding site" evidence="1">
    <location>
        <position position="33"/>
    </location>
    <ligand>
        <name>substrate</name>
    </ligand>
</feature>
<feature type="binding site" evidence="1">
    <location>
        <position position="68"/>
    </location>
    <ligand>
        <name>a divalent metal cation</name>
        <dbReference type="ChEBI" id="CHEBI:60240"/>
    </ligand>
</feature>
<feature type="binding site" evidence="1">
    <location>
        <position position="69"/>
    </location>
    <ligand>
        <name>a divalent metal cation</name>
        <dbReference type="ChEBI" id="CHEBI:60240"/>
    </ligand>
</feature>
<feature type="binding site" evidence="1">
    <location>
        <position position="69"/>
    </location>
    <ligand>
        <name>substrate</name>
    </ligand>
</feature>
<feature type="binding site" evidence="1">
    <location>
        <begin position="77"/>
        <end position="80"/>
    </location>
    <ligand>
        <name>substrate</name>
    </ligand>
</feature>
<feature type="binding site" evidence="1">
    <location>
        <position position="137"/>
    </location>
    <ligand>
        <name>a divalent metal cation</name>
        <dbReference type="ChEBI" id="CHEBI:60240"/>
    </ligand>
</feature>
<feature type="binding site" evidence="1">
    <location>
        <position position="137"/>
    </location>
    <ligand>
        <name>substrate</name>
    </ligand>
</feature>
<feature type="site" description="Appears to be important in orienting the phosphate for catalysis" evidence="1">
    <location>
        <position position="18"/>
    </location>
</feature>
<proteinExistence type="inferred from homology"/>
<dbReference type="EC" id="3.1.3.89" evidence="1"/>
<dbReference type="EMBL" id="CU928163">
    <property type="protein sequence ID" value="CAR13812.1"/>
    <property type="molecule type" value="Genomic_DNA"/>
</dbReference>
<dbReference type="RefSeq" id="WP_000813860.1">
    <property type="nucleotide sequence ID" value="NC_011751.1"/>
</dbReference>
<dbReference type="RefSeq" id="YP_002413340.1">
    <property type="nucleotide sequence ID" value="NC_011751.1"/>
</dbReference>
<dbReference type="SMR" id="B7N5Q3"/>
<dbReference type="STRING" id="585056.ECUMN_2630"/>
<dbReference type="GeneID" id="93774883"/>
<dbReference type="KEGG" id="eum:ECUMN_2630"/>
<dbReference type="PATRIC" id="fig|585056.7.peg.2812"/>
<dbReference type="HOGENOM" id="CLU_084784_0_0_6"/>
<dbReference type="Proteomes" id="UP000007097">
    <property type="component" value="Chromosome"/>
</dbReference>
<dbReference type="GO" id="GO:0005737">
    <property type="term" value="C:cytoplasm"/>
    <property type="evidence" value="ECO:0007669"/>
    <property type="project" value="UniProtKB-SubCell"/>
</dbReference>
<dbReference type="GO" id="GO:0002953">
    <property type="term" value="F:5'-deoxynucleotidase activity"/>
    <property type="evidence" value="ECO:0007669"/>
    <property type="project" value="UniProtKB-EC"/>
</dbReference>
<dbReference type="GO" id="GO:0046872">
    <property type="term" value="F:metal ion binding"/>
    <property type="evidence" value="ECO:0007669"/>
    <property type="project" value="UniProtKB-KW"/>
</dbReference>
<dbReference type="GO" id="GO:0000166">
    <property type="term" value="F:nucleotide binding"/>
    <property type="evidence" value="ECO:0007669"/>
    <property type="project" value="UniProtKB-KW"/>
</dbReference>
<dbReference type="CDD" id="cd00077">
    <property type="entry name" value="HDc"/>
    <property type="match status" value="1"/>
</dbReference>
<dbReference type="FunFam" id="1.10.3210.10:FF:000002">
    <property type="entry name" value="Nucleotidase YfbR"/>
    <property type="match status" value="1"/>
</dbReference>
<dbReference type="Gene3D" id="1.10.3210.10">
    <property type="entry name" value="Hypothetical protein af1432"/>
    <property type="match status" value="1"/>
</dbReference>
<dbReference type="HAMAP" id="MF_01100">
    <property type="entry name" value="5DNU"/>
    <property type="match status" value="1"/>
</dbReference>
<dbReference type="InterPro" id="IPR003607">
    <property type="entry name" value="HD/PDEase_dom"/>
</dbReference>
<dbReference type="InterPro" id="IPR006674">
    <property type="entry name" value="HD_domain"/>
</dbReference>
<dbReference type="InterPro" id="IPR022971">
    <property type="entry name" value="YfbR"/>
</dbReference>
<dbReference type="InterPro" id="IPR039356">
    <property type="entry name" value="YfbR/HDDC2"/>
</dbReference>
<dbReference type="NCBIfam" id="NF003009">
    <property type="entry name" value="PRK03826.1"/>
    <property type="match status" value="1"/>
</dbReference>
<dbReference type="PANTHER" id="PTHR11845">
    <property type="entry name" value="5'-DEOXYNUCLEOTIDASE HDDC2"/>
    <property type="match status" value="1"/>
</dbReference>
<dbReference type="PANTHER" id="PTHR11845:SF13">
    <property type="entry name" value="5'-DEOXYNUCLEOTIDASE HDDC2"/>
    <property type="match status" value="1"/>
</dbReference>
<dbReference type="Pfam" id="PF12917">
    <property type="entry name" value="YfbR-like"/>
    <property type="match status" value="1"/>
</dbReference>
<dbReference type="SMART" id="SM00471">
    <property type="entry name" value="HDc"/>
    <property type="match status" value="1"/>
</dbReference>
<dbReference type="SUPFAM" id="SSF109604">
    <property type="entry name" value="HD-domain/PDEase-like"/>
    <property type="match status" value="1"/>
</dbReference>
<dbReference type="PROSITE" id="PS51831">
    <property type="entry name" value="HD"/>
    <property type="match status" value="1"/>
</dbReference>
<comment type="function">
    <text evidence="1">Catalyzes the strictly specific dephosphorylation of 2'-deoxyribonucleoside 5'-monophosphates.</text>
</comment>
<comment type="catalytic activity">
    <reaction evidence="1">
        <text>a 2'-deoxyribonucleoside 5'-phosphate + H2O = a 2'-deoxyribonucleoside + phosphate</text>
        <dbReference type="Rhea" id="RHEA:36167"/>
        <dbReference type="ChEBI" id="CHEBI:15377"/>
        <dbReference type="ChEBI" id="CHEBI:18274"/>
        <dbReference type="ChEBI" id="CHEBI:43474"/>
        <dbReference type="ChEBI" id="CHEBI:65317"/>
        <dbReference type="EC" id="3.1.3.89"/>
    </reaction>
</comment>
<comment type="cofactor">
    <cofactor evidence="1">
        <name>a divalent metal cation</name>
        <dbReference type="ChEBI" id="CHEBI:60240"/>
    </cofactor>
</comment>
<comment type="subunit">
    <text evidence="1">Homodimer.</text>
</comment>
<comment type="subcellular location">
    <subcellularLocation>
        <location evidence="1">Cytoplasm</location>
    </subcellularLocation>
</comment>
<comment type="similarity">
    <text evidence="1">Belongs to the 5DNU family.</text>
</comment>
<evidence type="ECO:0000255" key="1">
    <source>
        <dbReference type="HAMAP-Rule" id="MF_01100"/>
    </source>
</evidence>
<evidence type="ECO:0000255" key="2">
    <source>
        <dbReference type="PROSITE-ProRule" id="PRU01175"/>
    </source>
</evidence>
<name>5DNU_ECOLU</name>
<protein>
    <recommendedName>
        <fullName evidence="1">5'-deoxynucleotidase YfbR</fullName>
        <ecNumber evidence="1">3.1.3.89</ecNumber>
    </recommendedName>
    <alternativeName>
        <fullName evidence="1">5'-deoxyribonucleotidase</fullName>
    </alternativeName>
    <alternativeName>
        <fullName evidence="1">Nucleoside 5'-monophosphate phosphohydrolase</fullName>
    </alternativeName>
</protein>
<sequence>MKQSHFFAHLSRLKLINRWPLMRNVRTENVSEHSLQVAMVAHALAAIKNRKFGGNVNAERIALLAMYHDASEVLTGDLPTPVKYFNSQIAQEYKAIEKIAQQKLVDMVPEELRDIFAPLIDEHAYSDEEKSLVKQADALCAYLKCLEELAAGNNEFLLAKTRLEATLEARRSQEMDYFMEVFVPSFHLSLDEISQDSPL</sequence>
<gene>
    <name evidence="1" type="primary">yfbR</name>
    <name type="ordered locus">ECUMN_2630</name>
</gene>
<reference key="1">
    <citation type="journal article" date="2009" name="PLoS Genet.">
        <title>Organised genome dynamics in the Escherichia coli species results in highly diverse adaptive paths.</title>
        <authorList>
            <person name="Touchon M."/>
            <person name="Hoede C."/>
            <person name="Tenaillon O."/>
            <person name="Barbe V."/>
            <person name="Baeriswyl S."/>
            <person name="Bidet P."/>
            <person name="Bingen E."/>
            <person name="Bonacorsi S."/>
            <person name="Bouchier C."/>
            <person name="Bouvet O."/>
            <person name="Calteau A."/>
            <person name="Chiapello H."/>
            <person name="Clermont O."/>
            <person name="Cruveiller S."/>
            <person name="Danchin A."/>
            <person name="Diard M."/>
            <person name="Dossat C."/>
            <person name="Karoui M.E."/>
            <person name="Frapy E."/>
            <person name="Garry L."/>
            <person name="Ghigo J.M."/>
            <person name="Gilles A.M."/>
            <person name="Johnson J."/>
            <person name="Le Bouguenec C."/>
            <person name="Lescat M."/>
            <person name="Mangenot S."/>
            <person name="Martinez-Jehanne V."/>
            <person name="Matic I."/>
            <person name="Nassif X."/>
            <person name="Oztas S."/>
            <person name="Petit M.A."/>
            <person name="Pichon C."/>
            <person name="Rouy Z."/>
            <person name="Ruf C.S."/>
            <person name="Schneider D."/>
            <person name="Tourret J."/>
            <person name="Vacherie B."/>
            <person name="Vallenet D."/>
            <person name="Medigue C."/>
            <person name="Rocha E.P.C."/>
            <person name="Denamur E."/>
        </authorList>
    </citation>
    <scope>NUCLEOTIDE SEQUENCE [LARGE SCALE GENOMIC DNA]</scope>
    <source>
        <strain>UMN026 / ExPEC</strain>
    </source>
</reference>
<organism>
    <name type="scientific">Escherichia coli O17:K52:H18 (strain UMN026 / ExPEC)</name>
    <dbReference type="NCBI Taxonomy" id="585056"/>
    <lineage>
        <taxon>Bacteria</taxon>
        <taxon>Pseudomonadati</taxon>
        <taxon>Pseudomonadota</taxon>
        <taxon>Gammaproteobacteria</taxon>
        <taxon>Enterobacterales</taxon>
        <taxon>Enterobacteriaceae</taxon>
        <taxon>Escherichia</taxon>
    </lineage>
</organism>
<accession>B7N5Q3</accession>
<keyword id="KW-0963">Cytoplasm</keyword>
<keyword id="KW-0378">Hydrolase</keyword>
<keyword id="KW-0479">Metal-binding</keyword>
<keyword id="KW-0547">Nucleotide-binding</keyword>